<keyword id="KW-0963">Cytoplasm</keyword>
<keyword id="KW-0690">Ribosome biogenesis</keyword>
<accession>B1IQV4</accession>
<evidence type="ECO:0000255" key="1">
    <source>
        <dbReference type="HAMAP-Rule" id="MF_00003"/>
    </source>
</evidence>
<gene>
    <name evidence="1" type="primary">rbfA</name>
    <name type="ordered locus">EcolC_0531</name>
</gene>
<proteinExistence type="inferred from homology"/>
<dbReference type="EMBL" id="CP000946">
    <property type="protein sequence ID" value="ACA76208.1"/>
    <property type="molecule type" value="Genomic_DNA"/>
</dbReference>
<dbReference type="RefSeq" id="WP_001040205.1">
    <property type="nucleotide sequence ID" value="NZ_MTFT01000027.1"/>
</dbReference>
<dbReference type="SMR" id="B1IQV4"/>
<dbReference type="GeneID" id="93778816"/>
<dbReference type="KEGG" id="ecl:EcolC_0531"/>
<dbReference type="HOGENOM" id="CLU_089475_5_0_6"/>
<dbReference type="GO" id="GO:0005829">
    <property type="term" value="C:cytosol"/>
    <property type="evidence" value="ECO:0007669"/>
    <property type="project" value="TreeGrafter"/>
</dbReference>
<dbReference type="GO" id="GO:0043024">
    <property type="term" value="F:ribosomal small subunit binding"/>
    <property type="evidence" value="ECO:0007669"/>
    <property type="project" value="TreeGrafter"/>
</dbReference>
<dbReference type="GO" id="GO:0030490">
    <property type="term" value="P:maturation of SSU-rRNA"/>
    <property type="evidence" value="ECO:0007669"/>
    <property type="project" value="UniProtKB-UniRule"/>
</dbReference>
<dbReference type="FunFam" id="3.30.300.20:FF:000007">
    <property type="entry name" value="Ribosome-binding factor A"/>
    <property type="match status" value="1"/>
</dbReference>
<dbReference type="Gene3D" id="3.30.300.20">
    <property type="match status" value="1"/>
</dbReference>
<dbReference type="HAMAP" id="MF_00003">
    <property type="entry name" value="RbfA"/>
    <property type="match status" value="1"/>
</dbReference>
<dbReference type="InterPro" id="IPR015946">
    <property type="entry name" value="KH_dom-like_a/b"/>
</dbReference>
<dbReference type="InterPro" id="IPR000238">
    <property type="entry name" value="RbfA"/>
</dbReference>
<dbReference type="InterPro" id="IPR023799">
    <property type="entry name" value="RbfA_dom_sf"/>
</dbReference>
<dbReference type="InterPro" id="IPR020053">
    <property type="entry name" value="Ribosome-bd_factorA_CS"/>
</dbReference>
<dbReference type="NCBIfam" id="TIGR00082">
    <property type="entry name" value="rbfA"/>
    <property type="match status" value="1"/>
</dbReference>
<dbReference type="PANTHER" id="PTHR33515">
    <property type="entry name" value="RIBOSOME-BINDING FACTOR A, CHLOROPLASTIC-RELATED"/>
    <property type="match status" value="1"/>
</dbReference>
<dbReference type="PANTHER" id="PTHR33515:SF1">
    <property type="entry name" value="RIBOSOME-BINDING FACTOR A, CHLOROPLASTIC-RELATED"/>
    <property type="match status" value="1"/>
</dbReference>
<dbReference type="Pfam" id="PF02033">
    <property type="entry name" value="RBFA"/>
    <property type="match status" value="1"/>
</dbReference>
<dbReference type="SUPFAM" id="SSF89919">
    <property type="entry name" value="Ribosome-binding factor A, RbfA"/>
    <property type="match status" value="1"/>
</dbReference>
<dbReference type="PROSITE" id="PS01319">
    <property type="entry name" value="RBFA"/>
    <property type="match status" value="1"/>
</dbReference>
<organism>
    <name type="scientific">Escherichia coli (strain ATCC 8739 / DSM 1576 / NBRC 3972 / NCIMB 8545 / WDCM 00012 / Crooks)</name>
    <dbReference type="NCBI Taxonomy" id="481805"/>
    <lineage>
        <taxon>Bacteria</taxon>
        <taxon>Pseudomonadati</taxon>
        <taxon>Pseudomonadota</taxon>
        <taxon>Gammaproteobacteria</taxon>
        <taxon>Enterobacterales</taxon>
        <taxon>Enterobacteriaceae</taxon>
        <taxon>Escherichia</taxon>
    </lineage>
</organism>
<name>RBFA_ECOLC</name>
<protein>
    <recommendedName>
        <fullName evidence="1">Ribosome-binding factor A</fullName>
    </recommendedName>
</protein>
<reference key="1">
    <citation type="submission" date="2008-02" db="EMBL/GenBank/DDBJ databases">
        <title>Complete sequence of Escherichia coli C str. ATCC 8739.</title>
        <authorList>
            <person name="Copeland A."/>
            <person name="Lucas S."/>
            <person name="Lapidus A."/>
            <person name="Glavina del Rio T."/>
            <person name="Dalin E."/>
            <person name="Tice H."/>
            <person name="Bruce D."/>
            <person name="Goodwin L."/>
            <person name="Pitluck S."/>
            <person name="Kiss H."/>
            <person name="Brettin T."/>
            <person name="Detter J.C."/>
            <person name="Han C."/>
            <person name="Kuske C.R."/>
            <person name="Schmutz J."/>
            <person name="Larimer F."/>
            <person name="Land M."/>
            <person name="Hauser L."/>
            <person name="Kyrpides N."/>
            <person name="Mikhailova N."/>
            <person name="Ingram L."/>
            <person name="Richardson P."/>
        </authorList>
    </citation>
    <scope>NUCLEOTIDE SEQUENCE [LARGE SCALE GENOMIC DNA]</scope>
    <source>
        <strain>ATCC 8739 / DSM 1576 / NBRC 3972 / NCIMB 8545 / WDCM 00012 / Crooks</strain>
    </source>
</reference>
<feature type="chain" id="PRO_1000073761" description="Ribosome-binding factor A">
    <location>
        <begin position="1"/>
        <end position="133"/>
    </location>
</feature>
<comment type="function">
    <text evidence="1">One of several proteins that assist in the late maturation steps of the functional core of the 30S ribosomal subunit. Associates with free 30S ribosomal subunits (but not with 30S subunits that are part of 70S ribosomes or polysomes). Required for efficient processing of 16S rRNA. May interact with the 5'-terminal helix region of 16S rRNA.</text>
</comment>
<comment type="subunit">
    <text evidence="1">Monomer. Binds 30S ribosomal subunits, but not 50S ribosomal subunits or 70S ribosomes.</text>
</comment>
<comment type="subcellular location">
    <subcellularLocation>
        <location evidence="1">Cytoplasm</location>
    </subcellularLocation>
</comment>
<comment type="similarity">
    <text evidence="1">Belongs to the RbfA family.</text>
</comment>
<sequence>MAKEFGRPQRVAQEMQKEIALILQREIKDPRLGMMTTVSGVEMSRDLAYAKVYVTFLNDKDEDAVKAGIKALQEASGFIRSLLGKAMRLRIVPELTFFYDNSLVEGMRMSNLVTSVVKHDEERRVNPDDSKED</sequence>